<comment type="function">
    <text evidence="1">One of the primary rRNA binding proteins, this protein initially binds near the 5'-end of the 23S rRNA. It is important during the early stages of 50S assembly. It makes multiple contacts with different domains of the 23S rRNA in the assembled 50S subunit and ribosome.</text>
</comment>
<comment type="function">
    <text evidence="1">Forms part of the polypeptide exit tunnel.</text>
</comment>
<comment type="subunit">
    <text evidence="1">Part of the 50S ribosomal subunit.</text>
</comment>
<comment type="similarity">
    <text evidence="1">Belongs to the universal ribosomal protein uL4 family.</text>
</comment>
<proteinExistence type="inferred from homology"/>
<keyword id="KW-1185">Reference proteome</keyword>
<keyword id="KW-0687">Ribonucleoprotein</keyword>
<keyword id="KW-0689">Ribosomal protein</keyword>
<keyword id="KW-0694">RNA-binding</keyword>
<keyword id="KW-0699">rRNA-binding</keyword>
<gene>
    <name evidence="1" type="primary">rplD</name>
    <name type="ordered locus">LEPBI_I1963</name>
</gene>
<reference key="1">
    <citation type="journal article" date="2008" name="PLoS ONE">
        <title>Genome sequence of the saprophyte Leptospira biflexa provides insights into the evolution of Leptospira and the pathogenesis of leptospirosis.</title>
        <authorList>
            <person name="Picardeau M."/>
            <person name="Bulach D.M."/>
            <person name="Bouchier C."/>
            <person name="Zuerner R.L."/>
            <person name="Zidane N."/>
            <person name="Wilson P.J."/>
            <person name="Creno S."/>
            <person name="Kuczek E.S."/>
            <person name="Bommezzadri S."/>
            <person name="Davis J.C."/>
            <person name="McGrath A."/>
            <person name="Johnson M.J."/>
            <person name="Boursaux-Eude C."/>
            <person name="Seemann T."/>
            <person name="Rouy Z."/>
            <person name="Coppel R.L."/>
            <person name="Rood J.I."/>
            <person name="Lajus A."/>
            <person name="Davies J.K."/>
            <person name="Medigue C."/>
            <person name="Adler B."/>
        </authorList>
    </citation>
    <scope>NUCLEOTIDE SEQUENCE [LARGE SCALE GENOMIC DNA]</scope>
    <source>
        <strain>Patoc 1 / ATCC 23582 / Paris</strain>
    </source>
</reference>
<dbReference type="EMBL" id="CP000786">
    <property type="protein sequence ID" value="ABZ98066.1"/>
    <property type="molecule type" value="Genomic_DNA"/>
</dbReference>
<dbReference type="RefSeq" id="WP_012388939.1">
    <property type="nucleotide sequence ID" value="NC_010602.1"/>
</dbReference>
<dbReference type="SMR" id="B0SSH6"/>
<dbReference type="STRING" id="456481.LEPBI_I1963"/>
<dbReference type="KEGG" id="lbi:LEPBI_I1963"/>
<dbReference type="HOGENOM" id="CLU_041575_5_2_12"/>
<dbReference type="OrthoDB" id="9803201at2"/>
<dbReference type="BioCyc" id="LBIF456481:LEPBI_RS09700-MONOMER"/>
<dbReference type="Proteomes" id="UP000001847">
    <property type="component" value="Chromosome I"/>
</dbReference>
<dbReference type="GO" id="GO:1990904">
    <property type="term" value="C:ribonucleoprotein complex"/>
    <property type="evidence" value="ECO:0007669"/>
    <property type="project" value="UniProtKB-KW"/>
</dbReference>
<dbReference type="GO" id="GO:0005840">
    <property type="term" value="C:ribosome"/>
    <property type="evidence" value="ECO:0007669"/>
    <property type="project" value="UniProtKB-KW"/>
</dbReference>
<dbReference type="GO" id="GO:0019843">
    <property type="term" value="F:rRNA binding"/>
    <property type="evidence" value="ECO:0007669"/>
    <property type="project" value="UniProtKB-UniRule"/>
</dbReference>
<dbReference type="GO" id="GO:0003735">
    <property type="term" value="F:structural constituent of ribosome"/>
    <property type="evidence" value="ECO:0007669"/>
    <property type="project" value="InterPro"/>
</dbReference>
<dbReference type="GO" id="GO:0006412">
    <property type="term" value="P:translation"/>
    <property type="evidence" value="ECO:0007669"/>
    <property type="project" value="UniProtKB-UniRule"/>
</dbReference>
<dbReference type="Gene3D" id="3.40.1370.10">
    <property type="match status" value="1"/>
</dbReference>
<dbReference type="HAMAP" id="MF_01328_B">
    <property type="entry name" value="Ribosomal_uL4_B"/>
    <property type="match status" value="1"/>
</dbReference>
<dbReference type="InterPro" id="IPR002136">
    <property type="entry name" value="Ribosomal_uL4"/>
</dbReference>
<dbReference type="InterPro" id="IPR013005">
    <property type="entry name" value="Ribosomal_uL4-like"/>
</dbReference>
<dbReference type="InterPro" id="IPR023574">
    <property type="entry name" value="Ribosomal_uL4_dom_sf"/>
</dbReference>
<dbReference type="NCBIfam" id="TIGR03953">
    <property type="entry name" value="rplD_bact"/>
    <property type="match status" value="1"/>
</dbReference>
<dbReference type="PANTHER" id="PTHR10746">
    <property type="entry name" value="50S RIBOSOMAL PROTEIN L4"/>
    <property type="match status" value="1"/>
</dbReference>
<dbReference type="PANTHER" id="PTHR10746:SF6">
    <property type="entry name" value="LARGE RIBOSOMAL SUBUNIT PROTEIN UL4M"/>
    <property type="match status" value="1"/>
</dbReference>
<dbReference type="Pfam" id="PF00573">
    <property type="entry name" value="Ribosomal_L4"/>
    <property type="match status" value="1"/>
</dbReference>
<dbReference type="SUPFAM" id="SSF52166">
    <property type="entry name" value="Ribosomal protein L4"/>
    <property type="match status" value="1"/>
</dbReference>
<evidence type="ECO:0000255" key="1">
    <source>
        <dbReference type="HAMAP-Rule" id="MF_01328"/>
    </source>
</evidence>
<evidence type="ECO:0000256" key="2">
    <source>
        <dbReference type="SAM" id="MobiDB-lite"/>
    </source>
</evidence>
<evidence type="ECO:0000305" key="3"/>
<protein>
    <recommendedName>
        <fullName evidence="1">Large ribosomal subunit protein uL4</fullName>
    </recommendedName>
    <alternativeName>
        <fullName evidence="3">50S ribosomal protein L4</fullName>
    </alternativeName>
</protein>
<sequence length="211" mass="23284">MKARKYNKEGVFVSEVELPAELFATGISLGAIYDAVKAENANNRQGTHSTKDRSEVRGGGIKPWAQKGTGRARQGSIRAPHFVGGGIIHGPKPRDYSSNLSRSVKKKAVLSILNKKAEENRIAIIEDVEPSSYSTKSIYNILKNMDIAEKGNVGFVVAGENQFLKKSTRNIENLKYVNSKRVVCRDILYNNNLVISESALKELQAQYSKKG</sequence>
<feature type="chain" id="PRO_1000142143" description="Large ribosomal subunit protein uL4">
    <location>
        <begin position="1"/>
        <end position="211"/>
    </location>
</feature>
<feature type="region of interest" description="Disordered" evidence="2">
    <location>
        <begin position="42"/>
        <end position="73"/>
    </location>
</feature>
<organism>
    <name type="scientific">Leptospira biflexa serovar Patoc (strain Patoc 1 / ATCC 23582 / Paris)</name>
    <dbReference type="NCBI Taxonomy" id="456481"/>
    <lineage>
        <taxon>Bacteria</taxon>
        <taxon>Pseudomonadati</taxon>
        <taxon>Spirochaetota</taxon>
        <taxon>Spirochaetia</taxon>
        <taxon>Leptospirales</taxon>
        <taxon>Leptospiraceae</taxon>
        <taxon>Leptospira</taxon>
    </lineage>
</organism>
<name>RL4_LEPBP</name>
<accession>B0SSH6</accession>